<accession>P07012</accession>
<accession>P76642</accession>
<accession>Q2M9V0</accession>
<protein>
    <recommendedName>
        <fullName>Peptide chain release factor RF2</fullName>
        <shortName>RF-2</shortName>
    </recommendedName>
</protein>
<dbReference type="EMBL" id="M11520">
    <property type="protein sequence ID" value="AAA24520.1"/>
    <property type="molecule type" value="Genomic_DNA"/>
</dbReference>
<dbReference type="EMBL" id="U28375">
    <property type="protein sequence ID" value="AAA83072.1"/>
    <property type="molecule type" value="Genomic_DNA"/>
</dbReference>
<dbReference type="EMBL" id="U00096">
    <property type="protein sequence ID" value="AAC75929.1"/>
    <property type="molecule type" value="Genomic_DNA"/>
</dbReference>
<dbReference type="EMBL" id="AP009048">
    <property type="protein sequence ID" value="BAE76956.1"/>
    <property type="molecule type" value="Genomic_DNA"/>
</dbReference>
<dbReference type="EMBL" id="J03795">
    <property type="protein sequence ID" value="AAA23958.1"/>
    <property type="molecule type" value="Genomic_DNA"/>
</dbReference>
<dbReference type="PIR" id="C65073">
    <property type="entry name" value="FCECR2"/>
</dbReference>
<dbReference type="RefSeq" id="NP_417367.1">
    <property type="nucleotide sequence ID" value="NC_000913.3"/>
</dbReference>
<dbReference type="RefSeq" id="WP_010723217.1">
    <property type="nucleotide sequence ID" value="NZ_LN832404.1"/>
</dbReference>
<dbReference type="PDB" id="1GQE">
    <property type="method" value="X-ray"/>
    <property type="resolution" value="1.81 A"/>
    <property type="chains" value="A=1-365"/>
</dbReference>
<dbReference type="PDB" id="1MI6">
    <property type="method" value="EM"/>
    <property type="resolution" value="10.90 A"/>
    <property type="chains" value="A=1-365"/>
</dbReference>
<dbReference type="PDB" id="1ML5">
    <property type="method" value="EM"/>
    <property type="resolution" value="14.00 A"/>
    <property type="chains" value="Z=1-365"/>
</dbReference>
<dbReference type="PDB" id="5CZP">
    <property type="method" value="X-ray"/>
    <property type="resolution" value="3.30 A"/>
    <property type="chains" value="QY/XY=1-365"/>
</dbReference>
<dbReference type="PDB" id="5DFE">
    <property type="method" value="X-ray"/>
    <property type="resolution" value="3.10 A"/>
    <property type="chains" value="QY/XY=1-365"/>
</dbReference>
<dbReference type="PDB" id="5H5U">
    <property type="method" value="EM"/>
    <property type="resolution" value="3.00 A"/>
    <property type="chains" value="4=1-365"/>
</dbReference>
<dbReference type="PDB" id="5MDV">
    <property type="method" value="EM"/>
    <property type="resolution" value="2.97 A"/>
    <property type="chains" value="7=1-365"/>
</dbReference>
<dbReference type="PDB" id="5MDW">
    <property type="method" value="EM"/>
    <property type="resolution" value="3.06 A"/>
    <property type="chains" value="7=1-365"/>
</dbReference>
<dbReference type="PDB" id="5MGP">
    <property type="method" value="EM"/>
    <property type="resolution" value="3.10 A"/>
    <property type="chains" value="z=6-364"/>
</dbReference>
<dbReference type="PDB" id="5U4I">
    <property type="method" value="EM"/>
    <property type="resolution" value="3.50 A"/>
    <property type="chains" value="v=1-365"/>
</dbReference>
<dbReference type="PDB" id="5U4J">
    <property type="method" value="EM"/>
    <property type="resolution" value="3.70 A"/>
    <property type="chains" value="v=1-365"/>
</dbReference>
<dbReference type="PDB" id="5U9F">
    <property type="method" value="EM"/>
    <property type="resolution" value="3.20 A"/>
    <property type="chains" value="Z=1-365"/>
</dbReference>
<dbReference type="PDB" id="5U9G">
    <property type="method" value="EM"/>
    <property type="resolution" value="3.20 A"/>
    <property type="chains" value="Z=1-365"/>
</dbReference>
<dbReference type="PDB" id="6C4H">
    <property type="method" value="EM"/>
    <property type="resolution" value="3.10 A"/>
    <property type="chains" value="v=1-365"/>
</dbReference>
<dbReference type="PDB" id="6C4I">
    <property type="method" value="EM"/>
    <property type="resolution" value="3.24 A"/>
    <property type="chains" value="v=1-365"/>
</dbReference>
<dbReference type="PDB" id="6OG7">
    <property type="method" value="EM"/>
    <property type="resolution" value="3.30 A"/>
    <property type="chains" value="8=1-365"/>
</dbReference>
<dbReference type="PDB" id="6OGF">
    <property type="method" value="EM"/>
    <property type="resolution" value="3.90 A"/>
    <property type="chains" value="8=2-365"/>
</dbReference>
<dbReference type="PDB" id="6OGG">
    <property type="method" value="EM"/>
    <property type="resolution" value="4.20 A"/>
    <property type="chains" value="8=2-365"/>
</dbReference>
<dbReference type="PDB" id="6OST">
    <property type="method" value="EM"/>
    <property type="resolution" value="4.20 A"/>
    <property type="chains" value="7=4-365"/>
</dbReference>
<dbReference type="PDB" id="6OT3">
    <property type="method" value="EM"/>
    <property type="resolution" value="3.90 A"/>
    <property type="chains" value="A=6-362"/>
</dbReference>
<dbReference type="PDB" id="6OUO">
    <property type="method" value="EM"/>
    <property type="resolution" value="3.70 A"/>
    <property type="chains" value="A=6-362"/>
</dbReference>
<dbReference type="PDB" id="7O1C">
    <property type="method" value="EM"/>
    <property type="resolution" value="2.60 A"/>
    <property type="chains" value="B9=1-365"/>
</dbReference>
<dbReference type="PDB" id="7OJ0">
    <property type="method" value="EM"/>
    <property type="resolution" value="3.50 A"/>
    <property type="chains" value="8=1-365"/>
</dbReference>
<dbReference type="PDB" id="8P16">
    <property type="method" value="EM"/>
    <property type="resolution" value="2.77 A"/>
    <property type="chains" value="6=1-365"/>
</dbReference>
<dbReference type="PDB" id="8P17">
    <property type="method" value="EM"/>
    <property type="resolution" value="2.78 A"/>
    <property type="chains" value="6=1-365"/>
</dbReference>
<dbReference type="PDB" id="8P18">
    <property type="method" value="EM"/>
    <property type="resolution" value="2.77 A"/>
    <property type="chains" value="6=1-365"/>
</dbReference>
<dbReference type="PDB" id="8QK7">
    <property type="method" value="EM"/>
    <property type="resolution" value="2.77 A"/>
    <property type="chains" value="6=1-365"/>
</dbReference>
<dbReference type="PDBsum" id="1GQE"/>
<dbReference type="PDBsum" id="1MI6"/>
<dbReference type="PDBsum" id="1ML5"/>
<dbReference type="PDBsum" id="5CZP"/>
<dbReference type="PDBsum" id="5DFE"/>
<dbReference type="PDBsum" id="5H5U"/>
<dbReference type="PDBsum" id="5MDV"/>
<dbReference type="PDBsum" id="5MDW"/>
<dbReference type="PDBsum" id="5MGP"/>
<dbReference type="PDBsum" id="5U4I"/>
<dbReference type="PDBsum" id="5U4J"/>
<dbReference type="PDBsum" id="5U9F"/>
<dbReference type="PDBsum" id="5U9G"/>
<dbReference type="PDBsum" id="6C4H"/>
<dbReference type="PDBsum" id="6C4I"/>
<dbReference type="PDBsum" id="6OG7"/>
<dbReference type="PDBsum" id="6OGF"/>
<dbReference type="PDBsum" id="6OGG"/>
<dbReference type="PDBsum" id="6OST"/>
<dbReference type="PDBsum" id="6OT3"/>
<dbReference type="PDBsum" id="6OUO"/>
<dbReference type="PDBsum" id="7O1C"/>
<dbReference type="PDBsum" id="7OJ0"/>
<dbReference type="PDBsum" id="8P16"/>
<dbReference type="PDBsum" id="8P17"/>
<dbReference type="PDBsum" id="8P18"/>
<dbReference type="PDBsum" id="8QK7"/>
<dbReference type="EMDB" id="EMD-1005"/>
<dbReference type="EMDB" id="EMD-12695"/>
<dbReference type="EMDB" id="EMD-12937"/>
<dbReference type="EMDB" id="EMD-17346"/>
<dbReference type="EMDB" id="EMD-17347"/>
<dbReference type="EMDB" id="EMD-17348"/>
<dbReference type="EMDB" id="EMD-18458"/>
<dbReference type="EMDB" id="EMD-20052"/>
<dbReference type="EMDB" id="EMD-3489"/>
<dbReference type="EMDB" id="EMD-3490"/>
<dbReference type="EMDB" id="EMD-3508"/>
<dbReference type="EMDB" id="EMD-6667"/>
<dbReference type="EMDB" id="EMD-7340"/>
<dbReference type="EMDB" id="EMD-7341"/>
<dbReference type="EMDB" id="EMD-8505"/>
<dbReference type="EMDB" id="EMD-8506"/>
<dbReference type="EMDB" id="EMD-8521"/>
<dbReference type="EMDB" id="EMD-8522"/>
<dbReference type="SMR" id="P07012"/>
<dbReference type="BioGRID" id="4259706">
    <property type="interactions" value="146"/>
</dbReference>
<dbReference type="BioGRID" id="851692">
    <property type="interactions" value="1"/>
</dbReference>
<dbReference type="DIP" id="DIP-10559N"/>
<dbReference type="FunCoup" id="P07012">
    <property type="interactions" value="638"/>
</dbReference>
<dbReference type="IntAct" id="P07012">
    <property type="interactions" value="65"/>
</dbReference>
<dbReference type="STRING" id="511145.b2891"/>
<dbReference type="iPTMnet" id="P07012"/>
<dbReference type="jPOST" id="P07012"/>
<dbReference type="PaxDb" id="511145-b2891"/>
<dbReference type="EnsemblBacteria" id="AAC75929">
    <property type="protein sequence ID" value="AAC75929"/>
    <property type="gene ID" value="b2891"/>
</dbReference>
<dbReference type="GeneID" id="947369"/>
<dbReference type="KEGG" id="ecj:JW5847"/>
<dbReference type="KEGG" id="eco:b2891"/>
<dbReference type="PATRIC" id="fig|511145.12.peg.2984"/>
<dbReference type="EchoBASE" id="EB0755"/>
<dbReference type="eggNOG" id="COG1186">
    <property type="taxonomic scope" value="Bacteria"/>
</dbReference>
<dbReference type="HOGENOM" id="CLU_220733_1_0_6"/>
<dbReference type="InParanoid" id="P07012"/>
<dbReference type="OMA" id="YVFHPYQ"/>
<dbReference type="OrthoDB" id="9806673at2"/>
<dbReference type="PhylomeDB" id="P07012"/>
<dbReference type="BioCyc" id="EcoCyc:EG10762-MONOMER"/>
<dbReference type="EvolutionaryTrace" id="P07012"/>
<dbReference type="PRO" id="PR:P07012"/>
<dbReference type="Proteomes" id="UP000000625">
    <property type="component" value="Chromosome"/>
</dbReference>
<dbReference type="GO" id="GO:0005829">
    <property type="term" value="C:cytosol"/>
    <property type="evidence" value="ECO:0000314"/>
    <property type="project" value="EcoCyc"/>
</dbReference>
<dbReference type="GO" id="GO:0016149">
    <property type="term" value="F:translation release factor activity, codon specific"/>
    <property type="evidence" value="ECO:0000314"/>
    <property type="project" value="EcoCyc"/>
</dbReference>
<dbReference type="GO" id="GO:0006415">
    <property type="term" value="P:translational termination"/>
    <property type="evidence" value="ECO:0000314"/>
    <property type="project" value="EcoCyc"/>
</dbReference>
<dbReference type="GO" id="GO:0075523">
    <property type="term" value="P:viral translational frameshifting"/>
    <property type="evidence" value="ECO:0007669"/>
    <property type="project" value="UniProtKB-KW"/>
</dbReference>
<dbReference type="FunFam" id="1.20.58.410:FF:000001">
    <property type="entry name" value="Peptide chain release factor 2"/>
    <property type="match status" value="1"/>
</dbReference>
<dbReference type="FunFam" id="3.30.160.20:FF:000010">
    <property type="entry name" value="Peptide chain release factor 2"/>
    <property type="match status" value="1"/>
</dbReference>
<dbReference type="Gene3D" id="3.30.160.20">
    <property type="match status" value="1"/>
</dbReference>
<dbReference type="Gene3D" id="3.30.70.1660">
    <property type="match status" value="1"/>
</dbReference>
<dbReference type="Gene3D" id="1.20.58.410">
    <property type="entry name" value="Release factor"/>
    <property type="match status" value="1"/>
</dbReference>
<dbReference type="HAMAP" id="MF_00094">
    <property type="entry name" value="Rel_fac_2"/>
    <property type="match status" value="1"/>
</dbReference>
<dbReference type="InterPro" id="IPR005139">
    <property type="entry name" value="PCRF"/>
</dbReference>
<dbReference type="InterPro" id="IPR000352">
    <property type="entry name" value="Pep_chain_release_fac_I"/>
</dbReference>
<dbReference type="InterPro" id="IPR045853">
    <property type="entry name" value="Pep_chain_release_fac_I_sf"/>
</dbReference>
<dbReference type="InterPro" id="IPR004374">
    <property type="entry name" value="PrfB"/>
</dbReference>
<dbReference type="NCBIfam" id="TIGR00020">
    <property type="entry name" value="prfB"/>
    <property type="match status" value="1"/>
</dbReference>
<dbReference type="PANTHER" id="PTHR43116:SF3">
    <property type="entry name" value="CLASS I PEPTIDE CHAIN RELEASE FACTOR"/>
    <property type="match status" value="1"/>
</dbReference>
<dbReference type="PANTHER" id="PTHR43116">
    <property type="entry name" value="PEPTIDE CHAIN RELEASE FACTOR 2"/>
    <property type="match status" value="1"/>
</dbReference>
<dbReference type="Pfam" id="PF03462">
    <property type="entry name" value="PCRF"/>
    <property type="match status" value="1"/>
</dbReference>
<dbReference type="Pfam" id="PF00472">
    <property type="entry name" value="RF-1"/>
    <property type="match status" value="1"/>
</dbReference>
<dbReference type="SMART" id="SM00937">
    <property type="entry name" value="PCRF"/>
    <property type="match status" value="1"/>
</dbReference>
<dbReference type="SUPFAM" id="SSF75620">
    <property type="entry name" value="Release factor"/>
    <property type="match status" value="1"/>
</dbReference>
<dbReference type="PROSITE" id="PS00745">
    <property type="entry name" value="RF_PROK_I"/>
    <property type="match status" value="1"/>
</dbReference>
<proteinExistence type="evidence at protein level"/>
<organism>
    <name type="scientific">Escherichia coli (strain K12)</name>
    <dbReference type="NCBI Taxonomy" id="83333"/>
    <lineage>
        <taxon>Bacteria</taxon>
        <taxon>Pseudomonadati</taxon>
        <taxon>Pseudomonadota</taxon>
        <taxon>Gammaproteobacteria</taxon>
        <taxon>Enterobacterales</taxon>
        <taxon>Enterobacteriaceae</taxon>
        <taxon>Escherichia</taxon>
    </lineage>
</organism>
<evidence type="ECO:0000269" key="1">
    <source>
    </source>
</evidence>
<evidence type="ECO:0000269" key="2">
    <source>
    </source>
</evidence>
<evidence type="ECO:0000269" key="3">
    <source>
    </source>
</evidence>
<evidence type="ECO:0000269" key="4">
    <source>
    </source>
</evidence>
<evidence type="ECO:0000269" key="5">
    <source>
    </source>
</evidence>
<evidence type="ECO:0000269" key="6">
    <source>
    </source>
</evidence>
<evidence type="ECO:0000269" key="7">
    <source>
    </source>
</evidence>
<evidence type="ECO:0000269" key="8">
    <source>
    </source>
</evidence>
<evidence type="ECO:0000269" key="9">
    <source>
    </source>
</evidence>
<evidence type="ECO:0000269" key="10">
    <source>
    </source>
</evidence>
<evidence type="ECO:0000269" key="11">
    <source>
    </source>
</evidence>
<evidence type="ECO:0000269" key="12">
    <source>
    </source>
</evidence>
<evidence type="ECO:0000269" key="13">
    <source>
    </source>
</evidence>
<evidence type="ECO:0000269" key="14">
    <source>
    </source>
</evidence>
<evidence type="ECO:0000303" key="15">
    <source>
    </source>
</evidence>
<evidence type="ECO:0000305" key="16"/>
<evidence type="ECO:0000305" key="17">
    <source>
    </source>
</evidence>
<evidence type="ECO:0000305" key="18">
    <source>
    </source>
</evidence>
<evidence type="ECO:0000312" key="19">
    <source>
        <dbReference type="PDB" id="7O1C"/>
    </source>
</evidence>
<evidence type="ECO:0000312" key="20">
    <source>
        <dbReference type="PDB" id="7OJ0"/>
    </source>
</evidence>
<evidence type="ECO:0007744" key="21">
    <source>
        <dbReference type="PDB" id="1GQE"/>
    </source>
</evidence>
<evidence type="ECO:0007744" key="22">
    <source>
        <dbReference type="PDB" id="1MI6"/>
    </source>
</evidence>
<evidence type="ECO:0007744" key="23">
    <source>
        <dbReference type="PDB" id="1ML5"/>
    </source>
</evidence>
<evidence type="ECO:0007744" key="24">
    <source>
        <dbReference type="PDB" id="5H5U"/>
    </source>
</evidence>
<evidence type="ECO:0007744" key="25">
    <source>
        <dbReference type="PDB" id="5MDV"/>
    </source>
</evidence>
<evidence type="ECO:0007744" key="26">
    <source>
        <dbReference type="PDB" id="5MDW"/>
    </source>
</evidence>
<evidence type="ECO:0007744" key="27">
    <source>
        <dbReference type="PDB" id="5MGP"/>
    </source>
</evidence>
<evidence type="ECO:0007744" key="28">
    <source>
        <dbReference type="PDB" id="5U4I"/>
    </source>
</evidence>
<evidence type="ECO:0007744" key="29">
    <source>
        <dbReference type="PDB" id="5U4J"/>
    </source>
</evidence>
<evidence type="ECO:0007829" key="30">
    <source>
        <dbReference type="PDB" id="1GQE"/>
    </source>
</evidence>
<evidence type="ECO:0007829" key="31">
    <source>
        <dbReference type="PDB" id="6C4H"/>
    </source>
</evidence>
<keyword id="KW-0002">3D-structure</keyword>
<keyword id="KW-0963">Cytoplasm</keyword>
<keyword id="KW-0903">Direct protein sequencing</keyword>
<keyword id="KW-0488">Methylation</keyword>
<keyword id="KW-0648">Protein biosynthesis</keyword>
<keyword id="KW-1185">Reference proteome</keyword>
<keyword id="KW-0688">Ribosomal frameshifting</keyword>
<feature type="chain" id="PRO_0000166816" description="Peptide chain release factor RF2">
    <location>
        <begin position="1"/>
        <end position="365"/>
    </location>
</feature>
<feature type="short sequence motif" description="GGQ motif">
    <location>
        <begin position="250"/>
        <end position="252"/>
    </location>
</feature>
<feature type="modified residue" description="N5-methylglutamine" evidence="1 3 13">
    <location>
        <position position="252"/>
    </location>
</feature>
<feature type="sequence variant" description="In strain: BL21 and MRE-600; increased termination efficiency." evidence="1 17">
    <original>T</original>
    <variation>A</variation>
    <location>
        <position position="246"/>
    </location>
</feature>
<feature type="mutagenesis site" description="About 50% ribosome rescue activity with ArfA, initial rate." evidence="10">
    <original>R</original>
    <variation>C</variation>
    <location>
        <position position="200"/>
    </location>
</feature>
<feature type="mutagenesis site" description="About 50% ribosome rescue activity with ArfA, initial rate." evidence="10">
    <original>S</original>
    <variation>C</variation>
    <location>
        <position position="205"/>
    </location>
</feature>
<feature type="mutagenesis site" description="No longer forms a detectable complex with TnaC-stalled 70S ribosomes." evidence="14">
    <original>S</original>
    <variation>P</variation>
    <location>
        <position position="205"/>
    </location>
</feature>
<feature type="mutagenesis site" description="No effect on ArfA rescue of stalled ribosomes." evidence="7">
    <original>P</original>
    <variation>T</variation>
    <location>
        <position position="206"/>
    </location>
</feature>
<feature type="mutagenesis site" description="About 5% ribosome rescue activity with ArfA, initial rate." evidence="10">
    <original>FVY</original>
    <variation>AVA</variation>
    <location>
        <begin position="221"/>
        <end position="223"/>
    </location>
</feature>
<feature type="mutagenesis site" description="No change in complex formation with TnaC-stalled 70S ribosomes." evidence="14">
    <original>Q</original>
    <variation>A</variation>
    <location>
        <position position="252"/>
    </location>
</feature>
<feature type="mutagenesis site" description="Loss of methylation. No longer allows ArfA to rescue stalled ribosomes." evidence="3 7 11">
    <original>Q</original>
    <variation>E</variation>
    <location>
        <position position="252"/>
    </location>
</feature>
<feature type="mutagenesis site" description="About 20% ribosome rescue activity with ArfA, initial rate." evidence="10">
    <original>QI</original>
    <variation>AA</variation>
    <location>
        <begin position="322"/>
        <end position="323"/>
    </location>
</feature>
<feature type="sequence conflict" description="In Ref. 1; AAA24520." evidence="16" ref="1">
    <original>L</original>
    <variation>V</variation>
    <location>
        <position position="201"/>
    </location>
</feature>
<feature type="helix" evidence="30">
    <location>
        <begin position="6"/>
        <end position="24"/>
    </location>
</feature>
<feature type="helix" evidence="30">
    <location>
        <begin position="27"/>
        <end position="42"/>
    </location>
</feature>
<feature type="helix" evidence="30">
    <location>
        <begin position="44"/>
        <end position="48"/>
    </location>
</feature>
<feature type="helix" evidence="30">
    <location>
        <begin position="50"/>
        <end position="90"/>
    </location>
</feature>
<feature type="helix" evidence="30">
    <location>
        <begin position="93"/>
        <end position="113"/>
    </location>
</feature>
<feature type="helix" evidence="30">
    <location>
        <begin position="114"/>
        <end position="118"/>
    </location>
</feature>
<feature type="turn" evidence="30">
    <location>
        <begin position="122"/>
        <end position="125"/>
    </location>
</feature>
<feature type="strand" evidence="30">
    <location>
        <begin position="128"/>
        <end position="134"/>
    </location>
</feature>
<feature type="helix" evidence="30">
    <location>
        <begin position="138"/>
        <end position="158"/>
    </location>
</feature>
<feature type="strand" evidence="30">
    <location>
        <begin position="162"/>
        <end position="170"/>
    </location>
</feature>
<feature type="strand" evidence="30">
    <location>
        <begin position="172"/>
        <end position="185"/>
    </location>
</feature>
<feature type="helix" evidence="30">
    <location>
        <begin position="188"/>
        <end position="192"/>
    </location>
</feature>
<feature type="helix" evidence="30">
    <location>
        <begin position="193"/>
        <end position="195"/>
    </location>
</feature>
<feature type="strand" evidence="30">
    <location>
        <begin position="197"/>
        <end position="204"/>
    </location>
</feature>
<feature type="strand" evidence="30">
    <location>
        <begin position="208"/>
        <end position="210"/>
    </location>
</feature>
<feature type="strand" evidence="30">
    <location>
        <begin position="213"/>
        <end position="224"/>
    </location>
</feature>
<feature type="helix" evidence="30">
    <location>
        <begin position="236"/>
        <end position="238"/>
    </location>
</feature>
<feature type="strand" evidence="30">
    <location>
        <begin position="239"/>
        <end position="244"/>
    </location>
</feature>
<feature type="turn" evidence="31">
    <location>
        <begin position="252"/>
        <end position="256"/>
    </location>
</feature>
<feature type="strand" evidence="30">
    <location>
        <begin position="260"/>
        <end position="265"/>
    </location>
</feature>
<feature type="turn" evidence="30">
    <location>
        <begin position="266"/>
        <end position="268"/>
    </location>
</feature>
<feature type="strand" evidence="30">
    <location>
        <begin position="271"/>
        <end position="274"/>
    </location>
</feature>
<feature type="strand" evidence="30">
    <location>
        <begin position="276"/>
        <end position="278"/>
    </location>
</feature>
<feature type="helix" evidence="30">
    <location>
        <begin position="280"/>
        <end position="306"/>
    </location>
</feature>
<feature type="strand" evidence="30">
    <location>
        <begin position="321"/>
        <end position="327"/>
    </location>
</feature>
<feature type="helix" evidence="30">
    <location>
        <begin position="328"/>
        <end position="330"/>
    </location>
</feature>
<feature type="strand" evidence="30">
    <location>
        <begin position="332"/>
        <end position="335"/>
    </location>
</feature>
<feature type="turn" evidence="30">
    <location>
        <begin position="336"/>
        <end position="338"/>
    </location>
</feature>
<feature type="strand" evidence="30">
    <location>
        <begin position="341"/>
        <end position="343"/>
    </location>
</feature>
<feature type="helix" evidence="30">
    <location>
        <begin position="345"/>
        <end position="349"/>
    </location>
</feature>
<feature type="helix" evidence="30">
    <location>
        <begin position="354"/>
        <end position="362"/>
    </location>
</feature>
<comment type="function">
    <text evidence="1 6 7 8 9 10 11 12 13 14 18">Peptide chain release factor 2 directs the termination of translation in response to the peptide chain termination codons UGA and UAA (PubMed:11118225, PubMed:17932046). Acts as a peptidyl-tRNA hydrolase (PubMed:22857598, PubMed:27934701). In the presence of truncated mRNA in the 70S ribosome, ArfA and RF2 interact such that the GGQ peptide hydrolysis motif of RF2 rises into the peptidyl-transferase center (PTC) and releases the ribosome (PubMed:27906160, PubMed:27906161, PubMed:27934701, PubMed:28077875). Recruited by ArfA to rescue stalled ribosomes in the absence of a normal stop codon (PubMed:22857598, PubMed:22922063, PubMed:25355516). A TnaC-stalled ribosome binds RF2, but the active GGQ motif is prevented from engaging with the PTC by TnaC (PubMed:34504068).</text>
</comment>
<comment type="subunit">
    <text evidence="4 5 7 8 9 10 11 12 13 14">Interacts with the ribosome (PubMed:12511960, PubMed:12511961, PubMed:22857598, PubMed:22922063, PubMed:25355516). Recruited to stalled ribosomes by ArfA, in the presence of truncated mRNA, ArfA influences RF2 conformation so RF2 can hydrolyze the peptidyl-tRNA bond (PubMed:27906160, PubMed:27906161, PubMed:27934701, PubMed:28077875). Biotinylated tnaC mRNA can be detected in a stalled 70S ribosome-RF2-TnaC-tRNA(Pro) complex (PubMed:34504068).</text>
</comment>
<comment type="subcellular location">
    <subcellularLocation>
        <location>Cytoplasm</location>
    </subcellularLocation>
    <text evidence="8 9 12">Recruited to the 70S ribosome by ArfA even in the absence of mRNA (PubMed:22922063, PubMed:25355516, PubMed:27934701).</text>
</comment>
<comment type="PTM">
    <text evidence="1 2 3 6">Methylated by PrmC. Methylation increases the termination efficiency of RF2. Is absent when the factor is overproduced.</text>
</comment>
<comment type="miscellaneous">
    <text evidence="7">The gene for this protein contains a UGA in-frame termination codon after Leu-25; a naturally occurring frameshift enables complete translation of RF-2. This provides a mechanism for the protein to regulate its own production.</text>
</comment>
<comment type="similarity">
    <text evidence="16">Belongs to the prokaryotic/mitochondrial release factor family.</text>
</comment>
<reference key="1">
    <citation type="journal article" date="1985" name="Proc. Natl. Acad. Sci. U.S.A.">
        <title>Bacterial peptide chain release factors: conserved primary structure and possible frameshift regulation of release factor 2.</title>
        <authorList>
            <person name="Craigen W.J."/>
            <person name="Cook R.G."/>
            <person name="Tate W.P."/>
            <person name="Caskey C.T."/>
        </authorList>
    </citation>
    <scope>NUCLEOTIDE SEQUENCE [GENOMIC DNA]</scope>
    <scope>PROTEIN SEQUENCE OF 1-44</scope>
    <scope>EXPRESSION REGULATION</scope>
</reference>
<reference key="2">
    <citation type="journal article" date="1988" name="J. Bacteriol.">
        <title>Rapid and precise mapping of the Escherichia coli release factor genes by two physical approaches.</title>
        <authorList>
            <person name="Lee C.C."/>
            <person name="Kohara Y."/>
            <person name="Akiyama K."/>
            <person name="Smith C.L."/>
            <person name="Craigen W.J."/>
            <person name="Caskey C.T."/>
        </authorList>
    </citation>
    <scope>SEQUENCE REVISION</scope>
</reference>
<reference key="3">
    <citation type="journal article" date="2000" name="EMBO J.">
        <title>A post-translational modification in the GGQ motif of RF2 from Escherichia coli stimulates termination of translation.</title>
        <authorList>
            <person name="Dincbas-Renqvist V."/>
            <person name="Engstroem A."/>
            <person name="Mora L."/>
            <person name="Heurgue-Hamard V."/>
            <person name="Buckingham R."/>
            <person name="Ehrenberg M."/>
        </authorList>
    </citation>
    <scope>NUCLEOTIDE SEQUENCE [GENOMIC DNA]</scope>
    <scope>PROTEIN SEQUENCE OF 246-256</scope>
    <scope>FUNCTION</scope>
    <scope>METHYLATION AT GLN-252</scope>
    <scope>IDENTIFICATION BY MASS SPECTROMETRY</scope>
    <source>
        <strain>B / BL21</strain>
        <strain>K12 / W3110 / ATCC 27325 / DSM 5911</strain>
        <strain>K12 / Xac</strain>
        <strain>MRE-600</strain>
    </source>
</reference>
<reference key="4">
    <citation type="journal article" date="1997" name="Science">
        <title>The complete genome sequence of Escherichia coli K-12.</title>
        <authorList>
            <person name="Blattner F.R."/>
            <person name="Plunkett G. III"/>
            <person name="Bloch C.A."/>
            <person name="Perna N.T."/>
            <person name="Burland V."/>
            <person name="Riley M."/>
            <person name="Collado-Vides J."/>
            <person name="Glasner J.D."/>
            <person name="Rode C.K."/>
            <person name="Mayhew G.F."/>
            <person name="Gregor J."/>
            <person name="Davis N.W."/>
            <person name="Kirkpatrick H.A."/>
            <person name="Goeden M.A."/>
            <person name="Rose D.J."/>
            <person name="Mau B."/>
            <person name="Shao Y."/>
        </authorList>
    </citation>
    <scope>NUCLEOTIDE SEQUENCE [LARGE SCALE GENOMIC DNA]</scope>
    <source>
        <strain>K12 / MG1655 / ATCC 47076</strain>
    </source>
</reference>
<reference key="5">
    <citation type="journal article" date="2006" name="Mol. Syst. Biol.">
        <title>Highly accurate genome sequences of Escherichia coli K-12 strains MG1655 and W3110.</title>
        <authorList>
            <person name="Hayashi K."/>
            <person name="Morooka N."/>
            <person name="Yamamoto Y."/>
            <person name="Fujita K."/>
            <person name="Isono K."/>
            <person name="Choi S."/>
            <person name="Ohtsubo E."/>
            <person name="Baba T."/>
            <person name="Wanner B.L."/>
            <person name="Mori H."/>
            <person name="Horiuchi T."/>
        </authorList>
    </citation>
    <scope>NUCLEOTIDE SEQUENCE [LARGE SCALE GENOMIC DNA]</scope>
    <source>
        <strain>K12 / W3110 / ATCC 27325 / DSM 5911</strain>
    </source>
</reference>
<reference key="6">
    <citation type="journal article" date="1988" name="Proc. Natl. Acad. Sci. U.S.A.">
        <title>Chromosomal location and structure of the operon encoding peptide-chain-release factor 2 of Escherichia coli.</title>
        <authorList>
            <person name="Kawakami K."/>
            <person name="Joensson Y.H."/>
            <person name="Bjoerk G.R."/>
            <person name="Ikeda H."/>
            <person name="Nakamura Y."/>
        </authorList>
    </citation>
    <scope>NUCLEOTIDE SEQUENCE [GENOMIC DNA] OF 294-365</scope>
</reference>
<reference key="7">
    <citation type="journal article" date="2002" name="EMBO J.">
        <title>The hemK gene in Escherichia coli encodes the N(5)-glutamine methyltransferase that modifies peptide release factors.</title>
        <authorList>
            <person name="Heurgue-Hamard V."/>
            <person name="Champ S."/>
            <person name="Engstroem A."/>
            <person name="Ehrenberg M."/>
            <person name="Buckingham R.H."/>
        </authorList>
    </citation>
    <scope>METHYLATION AT GLN-252 BY PRMC</scope>
    <scope>MUTAGENESIS OF GLN-252</scope>
    <source>
        <strain>K12</strain>
    </source>
</reference>
<reference key="8">
    <citation type="journal article" date="2002" name="Proc. Natl. Acad. Sci. U.S.A.">
        <title>HemK, a class of protein methyl transferase with similarity to DNA methyl transferases, methylates polypeptide chain release factors, and hemK knockout induces defects in translational termination.</title>
        <authorList>
            <person name="Nakahigashi K."/>
            <person name="Kubo N."/>
            <person name="Narita S."/>
            <person name="Shimaoka T."/>
            <person name="Goto S."/>
            <person name="Oshima T."/>
            <person name="Mori H."/>
            <person name="Maeda M."/>
            <person name="Wada C."/>
            <person name="Inokuchi H."/>
        </authorList>
    </citation>
    <scope>METHYLATION BY PRMC</scope>
    <source>
        <strain>K12</strain>
    </source>
</reference>
<reference key="9">
    <citation type="journal article" date="2007" name="J. Biol. Chem.">
        <title>Methylation of bacterial release factors RF1 and RF2 is required for normal translation termination in vivo.</title>
        <authorList>
            <person name="Mora L."/>
            <person name="Heurgue-Hamard V."/>
            <person name="de Zamaroczy M."/>
            <person name="Kervestin S."/>
            <person name="Buckingham R.H."/>
        </authorList>
    </citation>
    <scope>FUNCTION</scope>
    <scope>PTM</scope>
    <scope>EFFECT OF METHYLATION</scope>
    <source>
        <strain>K12</strain>
    </source>
</reference>
<reference key="10">
    <citation type="journal article" date="2012" name="Mol. Microbiol.">
        <title>ArfA recruits release factor 2 to rescue stalled ribosomes by peptidyl-tRNA hydrolysis in Escherichia coli.</title>
        <authorList>
            <person name="Chadani Y."/>
            <person name="Ito K."/>
            <person name="Kutsukake K."/>
            <person name="Abo T."/>
        </authorList>
    </citation>
    <scope>FUNCTION IN RIBOSOME RESCUE</scope>
    <scope>MUTAGENESIS OF PRO-206 AND GLN-252</scope>
    <source>
        <strain>B</strain>
        <strain>K12</strain>
    </source>
</reference>
<reference key="11">
    <citation type="journal article" date="2012" name="J. Mol. Biol.">
        <title>ArfA recruits RF2 into stalled ribosomes.</title>
        <authorList>
            <person name="Shimizu Y."/>
        </authorList>
    </citation>
    <scope>FUNCTION IN RIBOSOME RESCUE</scope>
    <scope>SUBUNIT</scope>
    <scope>SUBCELLULAR LOCATION</scope>
</reference>
<reference key="12">
    <citation type="journal article" date="2014" name="Nucleic Acids Res.">
        <title>ArfA recognizes the lack of mRNA in the mRNA channel after RF2 binding for ribosome rescue.</title>
        <authorList>
            <person name="Kurita D."/>
            <person name="Chadani Y."/>
            <person name="Muto A."/>
            <person name="Abo T."/>
            <person name="Himeno H."/>
        </authorList>
    </citation>
    <scope>FUNCTION IN RIBOSOME RESCUE</scope>
    <scope>SUBUNIT</scope>
    <scope>SUBCELLULAR LOCATION</scope>
</reference>
<reference evidence="21" key="13">
    <citation type="journal article" date="2001" name="Mol. Cell">
        <title>Bacterial polypeptide release factor RF2 is structurally distinct from eukaryotic eRF1.</title>
        <authorList>
            <person name="Vestergaard B."/>
            <person name="Van L.B."/>
            <person name="Andersen G.R."/>
            <person name="Nyborg J."/>
            <person name="Buckingham R.H."/>
            <person name="Kjeldgaard M."/>
        </authorList>
    </citation>
    <scope>X-RAY CRYSTALLOGRAPHY (1.81 ANGSTROMS) OF MUTANT ALA-246</scope>
    <source>
        <strain>K12</strain>
    </source>
</reference>
<reference evidence="22" key="14">
    <citation type="journal article" date="2003" name="Nature">
        <title>A cryo-electron microscopic study of ribosome-bound termination factor RF2.</title>
        <authorList>
            <person name="Rawat U.B."/>
            <person name="Zavialov A.V."/>
            <person name="Sengupta J."/>
            <person name="Valle M."/>
            <person name="Grassucci R.A."/>
            <person name="Linde J."/>
            <person name="Vestergaard B."/>
            <person name="Ehrenberg M."/>
            <person name="Frank J."/>
        </authorList>
    </citation>
    <scope>STRUCTURE BY ELECTRON MICROSCOPY (12.8 ANGSTROMS) IN COMPLEX WITH 70S RIBOSOME</scope>
    <scope>SUBUNIT</scope>
</reference>
<reference evidence="23" key="15">
    <citation type="journal article" date="2003" name="Nature">
        <title>Structure of the Escherichia coli ribosomal termination complex with release factor 2.</title>
        <authorList>
            <person name="Klaholz B.P."/>
            <person name="Pape T."/>
            <person name="Zavialov A.V."/>
            <person name="Myasnikov A.G."/>
            <person name="Orlova E.V."/>
            <person name="Vestergaard B."/>
            <person name="Ehrenberg M."/>
            <person name="van Heel M."/>
        </authorList>
    </citation>
    <scope>STRUCTURE BY ELECTRON MICROSCOPY (14.0 ANGSTROMS) IN COMPLEX WITH 70S RIBOSOME</scope>
    <scope>SUBUNIT</scope>
</reference>
<reference evidence="24" key="16">
    <citation type="journal article" date="2017" name="Nature">
        <title>Mechanistic insights into the alternative translation termination by ArfA and RF2.</title>
        <authorList>
            <person name="Ma C."/>
            <person name="Kurita D."/>
            <person name="Li N."/>
            <person name="Chen Y."/>
            <person name="Himeno H."/>
            <person name="Gao N."/>
        </authorList>
    </citation>
    <scope>STRUCTURE BY ELECTRON MICROSCOPY (3.0 ANGSTROMS) IN COMPLEX WITH 70S RIBOSOME AND ARFA</scope>
    <scope>FUNCTION IN RIBOSOME RESCUE</scope>
    <scope>INTERACTION WITH ARFA</scope>
    <scope>MUTAGENESIS OF ARG-200; SER-205; 221-PHE--TYR-223 AND 322-GLN-ILE-323</scope>
    <source>
        <strain>B</strain>
    </source>
</reference>
<reference evidence="27" key="17">
    <citation type="journal article" date="2017" name="Nature">
        <title>Structural basis for ArfA-RF2-mediated translation termination on mRNAs lacking stop codons.</title>
        <authorList>
            <person name="Huter P."/>
            <person name="Mueller C."/>
            <person name="Beckert B."/>
            <person name="Arenz S."/>
            <person name="Berninghausen O."/>
            <person name="Beckmann R."/>
            <person name="Wilson D.N."/>
        </authorList>
    </citation>
    <scope>STRUCTURE BY ELECTRON MICROSCOPY (3.1 ANGSTROMS) OF 6-364 IN COMPLEX WITH 70S RIBOSOME AND ARFA</scope>
    <scope>FUNCTION IN RIBOSOME RESCUE</scope>
    <scope>INTERACTION WITH ARFA</scope>
    <scope>MUTAGENESIS OF GLN-252</scope>
</reference>
<reference evidence="25 26" key="18">
    <citation type="journal article" date="2016" name="Science">
        <title>Translational termination without a stop codon.</title>
        <authorList>
            <person name="James N.R."/>
            <person name="Brown A."/>
            <person name="Gordiyenko Y."/>
            <person name="Ramakrishnan V."/>
        </authorList>
    </citation>
    <scope>STRUCTURE BY ELECTRON MICROSCOPY (2.97 ANGSTROMS) IN COMPLEX WITH 70S RIBOSOME AND ARFA</scope>
    <scope>FUNCTION IN RIBOSOME RESCUE</scope>
    <scope>INTERACTION WITH ARFA</scope>
</reference>
<reference evidence="28 29" key="19">
    <citation type="journal article" date="2017" name="Nature">
        <title>Structural basis of co-translational quality control by ArfA and RF2 bound to ribosome.</title>
        <authorList>
            <person name="Zeng F."/>
            <person name="Chen Y."/>
            <person name="Remis J."/>
            <person name="Shekhar M."/>
            <person name="Phillips J.C."/>
            <person name="Tajkhorshid E."/>
            <person name="Jin H."/>
        </authorList>
    </citation>
    <scope>STRUCTURE BY ELECTRON MICROSCOPY (3.52 ANGSTROMS) OF 1-365 IN COMPLEX WITH 70S RIBOSOME AND ARFA</scope>
    <scope>FUNCTION IN RIBOSOME RESCUE</scope>
    <scope>INTERACTION WITH RF2</scope>
    <scope>INTERACTION WITH 16S RRNA</scope>
    <scope>METHYLATION AT GLN-252</scope>
</reference>
<reference evidence="19" key="20">
    <citation type="journal article" date="2021" name="Nat. Commun.">
        <title>Structural basis for the tryptophan sensitivity of TnaC-mediated ribosome stalling.</title>
        <authorList>
            <person name="van der Stel A.X."/>
            <person name="Gordon E.R."/>
            <person name="Sengupta A."/>
            <person name="Martinez A.K."/>
            <person name="Klepacki D."/>
            <person name="Perry T.N."/>
            <person name="Herrero Del Valle A."/>
            <person name="Vazquez-Laslop N."/>
            <person name="Sachs M.S."/>
            <person name="Cruz-Vera L.R."/>
            <person name="Innis C.A."/>
        </authorList>
    </citation>
    <scope>STRUCTURE BY ELECTRON MICROSCOPY (2.60 ANGSTROMS) IN TNAC-STALLED RIBOSOME WITH L-TRYPTOPHAN</scope>
    <scope>FUNCTION</scope>
    <scope>SUBUNIT</scope>
    <scope>MUTAGENESIS OF SER-205 AND GLN-252</scope>
    <source>
        <strain>K12 / MG1655 / ATCC 47076</strain>
    </source>
</reference>
<reference evidence="20" key="21">
    <citation type="journal article" date="2021" name="Nucleic Acids Res.">
        <title>Structural basis of L-tryptophan-dependent inhibition of release factor 2 by the TnaC arrest peptide.</title>
        <authorList>
            <person name="Su T."/>
            <person name="Kudva R."/>
            <person name="Becker T."/>
            <person name="Buschauer R."/>
            <person name="Komar T."/>
            <person name="Berninghausen O."/>
            <person name="von Heijne G."/>
            <person name="Cheng J."/>
            <person name="Beckmann R."/>
        </authorList>
    </citation>
    <scope>STRUCTURE BY ELECTRON MICROSCOPY (3.50 ANGSTROMS) IN TNAC-STALLED RIBOSOME WITH AND WITHOUT L-TRYPTOPHAN</scope>
    <source>
        <strain>K12</strain>
    </source>
</reference>
<name>RF2_ECOLI</name>
<sequence>MFEINPVNNRIQDLTERSDVLRGYLDYDAKKERLEEVNAELEQPDVWNEPERAQALGKERSSLEAVVDTLDQMKQGLEDVSGLLELAVEADDEETFNEAVAELDALEEKLAQLEFRRMFSGEYDSADCYLDIQAGSGGTEAQDWASMLERMYLRWAESRGFKTEIIEESEGEVAGIKSVTIKISGDYAYGWLRTETGVHRLVRKSPFDSGGRRHTSFSSAFVYPEVDDDIDIEINPADLRIDVYRTSGAGGQHVNRTESAVRITHIPTGIVTQCQNDRSQHKNKDQAMKQMKAKLYELEMQKKNAEKQAMEDNKSDIGWGSQIRSYVLDDSRIKDLRTGVETRNTQAVLDGSLDQFIEASLKAGL</sequence>
<gene>
    <name evidence="15" type="primary">prfB</name>
    <name type="synonym">supK</name>
    <name type="ordered locus">b2891</name>
    <name type="ordered locus">JW5847</name>
</gene>